<evidence type="ECO:0000250" key="1">
    <source>
        <dbReference type="UniProtKB" id="Q5FWP4"/>
    </source>
</evidence>
<evidence type="ECO:0000250" key="2">
    <source>
        <dbReference type="UniProtKB" id="Q96EP1"/>
    </source>
</evidence>
<evidence type="ECO:0000255" key="3">
    <source>
        <dbReference type="PROSITE-ProRule" id="PRU00086"/>
    </source>
</evidence>
<evidence type="ECO:0000255" key="4">
    <source>
        <dbReference type="PROSITE-ProRule" id="PRU00175"/>
    </source>
</evidence>
<evidence type="ECO:0000256" key="5">
    <source>
        <dbReference type="SAM" id="MobiDB-lite"/>
    </source>
</evidence>
<evidence type="ECO:0000305" key="6"/>
<organism>
    <name type="scientific">Xenopus tropicalis</name>
    <name type="common">Western clawed frog</name>
    <name type="synonym">Silurana tropicalis</name>
    <dbReference type="NCBI Taxonomy" id="8364"/>
    <lineage>
        <taxon>Eukaryota</taxon>
        <taxon>Metazoa</taxon>
        <taxon>Chordata</taxon>
        <taxon>Craniata</taxon>
        <taxon>Vertebrata</taxon>
        <taxon>Euteleostomi</taxon>
        <taxon>Amphibia</taxon>
        <taxon>Batrachia</taxon>
        <taxon>Anura</taxon>
        <taxon>Pipoidea</taxon>
        <taxon>Pipidae</taxon>
        <taxon>Xenopodinae</taxon>
        <taxon>Xenopus</taxon>
        <taxon>Silurana</taxon>
    </lineage>
</organism>
<dbReference type="EC" id="2.3.2.27" evidence="2"/>
<dbReference type="EMBL" id="BC064721">
    <property type="protein sequence ID" value="AAH64721.1"/>
    <property type="molecule type" value="mRNA"/>
</dbReference>
<dbReference type="RefSeq" id="NP_989378.1">
    <property type="nucleotide sequence ID" value="NM_204047.1"/>
</dbReference>
<dbReference type="RefSeq" id="XP_012813996.1">
    <property type="nucleotide sequence ID" value="XM_012958542.3"/>
</dbReference>
<dbReference type="RefSeq" id="XP_012814001.1">
    <property type="nucleotide sequence ID" value="XM_012958547.3"/>
</dbReference>
<dbReference type="SMR" id="Q6P256"/>
<dbReference type="FunCoup" id="Q6P256">
    <property type="interactions" value="2032"/>
</dbReference>
<dbReference type="STRING" id="8364.ENSXETP00000037220"/>
<dbReference type="PaxDb" id="8364-ENSXETP00000052239"/>
<dbReference type="DNASU" id="395009"/>
<dbReference type="GeneID" id="395009"/>
<dbReference type="KEGG" id="xtr:395009"/>
<dbReference type="AGR" id="Xenbase:XB-GENE-998659"/>
<dbReference type="CTD" id="55743"/>
<dbReference type="Xenbase" id="XB-GENE-998659">
    <property type="gene designation" value="chfr"/>
</dbReference>
<dbReference type="eggNOG" id="KOG0802">
    <property type="taxonomic scope" value="Eukaryota"/>
</dbReference>
<dbReference type="HOGENOM" id="CLU_032966_0_0_1"/>
<dbReference type="InParanoid" id="Q6P256"/>
<dbReference type="OMA" id="SNYWFPG"/>
<dbReference type="OrthoDB" id="1305878at2759"/>
<dbReference type="PhylomeDB" id="Q6P256"/>
<dbReference type="TreeFam" id="TF330957"/>
<dbReference type="UniPathway" id="UPA00143"/>
<dbReference type="Proteomes" id="UP000008143">
    <property type="component" value="Chromosome 1"/>
</dbReference>
<dbReference type="Bgee" id="ENSXETG00000024212">
    <property type="expression patterns" value="Expressed in egg cell and 13 other cell types or tissues"/>
</dbReference>
<dbReference type="GO" id="GO:0005634">
    <property type="term" value="C:nucleus"/>
    <property type="evidence" value="ECO:0000250"/>
    <property type="project" value="UniProtKB"/>
</dbReference>
<dbReference type="GO" id="GO:0016605">
    <property type="term" value="C:PML body"/>
    <property type="evidence" value="ECO:0000250"/>
    <property type="project" value="UniProtKB"/>
</dbReference>
<dbReference type="GO" id="GO:0000166">
    <property type="term" value="F:nucleotide binding"/>
    <property type="evidence" value="ECO:0000250"/>
    <property type="project" value="UniProtKB"/>
</dbReference>
<dbReference type="GO" id="GO:0004842">
    <property type="term" value="F:ubiquitin-protein transferase activity"/>
    <property type="evidence" value="ECO:0000250"/>
    <property type="project" value="UniProtKB"/>
</dbReference>
<dbReference type="GO" id="GO:0008270">
    <property type="term" value="F:zinc ion binding"/>
    <property type="evidence" value="ECO:0007669"/>
    <property type="project" value="UniProtKB-KW"/>
</dbReference>
<dbReference type="GO" id="GO:0051301">
    <property type="term" value="P:cell division"/>
    <property type="evidence" value="ECO:0007669"/>
    <property type="project" value="UniProtKB-KW"/>
</dbReference>
<dbReference type="GO" id="GO:0044818">
    <property type="term" value="P:mitotic G2/M transition checkpoint"/>
    <property type="evidence" value="ECO:0000250"/>
    <property type="project" value="UniProtKB"/>
</dbReference>
<dbReference type="GO" id="GO:0016567">
    <property type="term" value="P:protein ubiquitination"/>
    <property type="evidence" value="ECO:0007669"/>
    <property type="project" value="UniProtKB-UniPathway"/>
</dbReference>
<dbReference type="GO" id="GO:0006511">
    <property type="term" value="P:ubiquitin-dependent protein catabolic process"/>
    <property type="evidence" value="ECO:0000250"/>
    <property type="project" value="UniProtKB"/>
</dbReference>
<dbReference type="CDD" id="cd22672">
    <property type="entry name" value="FHA_CHFR"/>
    <property type="match status" value="1"/>
</dbReference>
<dbReference type="CDD" id="cd16503">
    <property type="entry name" value="RING-HC_CHFR"/>
    <property type="match status" value="1"/>
</dbReference>
<dbReference type="FunFam" id="3.30.40.10:FF:000203">
    <property type="entry name" value="E3 ubiquitin-protein ligase CHFR isoform X1"/>
    <property type="match status" value="1"/>
</dbReference>
<dbReference type="FunFam" id="3.30.40.140:FF:000001">
    <property type="entry name" value="E3 ubiquitin-protein ligase CHFR isoform X1"/>
    <property type="match status" value="1"/>
</dbReference>
<dbReference type="FunFam" id="2.60.200.20:FF:000022">
    <property type="entry name" value="E3 ubiquitin-protein ligase CHFR isoform X2"/>
    <property type="match status" value="1"/>
</dbReference>
<dbReference type="Gene3D" id="2.60.200.20">
    <property type="match status" value="1"/>
</dbReference>
<dbReference type="Gene3D" id="3.30.40.140">
    <property type="match status" value="1"/>
</dbReference>
<dbReference type="Gene3D" id="3.30.40.10">
    <property type="entry name" value="Zinc/RING finger domain, C3HC4 (zinc finger)"/>
    <property type="match status" value="1"/>
</dbReference>
<dbReference type="InterPro" id="IPR040909">
    <property type="entry name" value="CHFR_Znf-CRD"/>
</dbReference>
<dbReference type="InterPro" id="IPR052256">
    <property type="entry name" value="E3_ubiquitin-ligase_CHFR"/>
</dbReference>
<dbReference type="InterPro" id="IPR000253">
    <property type="entry name" value="FHA_dom"/>
</dbReference>
<dbReference type="InterPro" id="IPR008984">
    <property type="entry name" value="SMAD_FHA_dom_sf"/>
</dbReference>
<dbReference type="InterPro" id="IPR001841">
    <property type="entry name" value="Znf_RING"/>
</dbReference>
<dbReference type="InterPro" id="IPR013083">
    <property type="entry name" value="Znf_RING/FYVE/PHD"/>
</dbReference>
<dbReference type="InterPro" id="IPR017907">
    <property type="entry name" value="Znf_RING_CS"/>
</dbReference>
<dbReference type="PANTHER" id="PTHR16079:SF4">
    <property type="entry name" value="E3 UBIQUITIN-PROTEIN LIGASE CHFR"/>
    <property type="match status" value="1"/>
</dbReference>
<dbReference type="PANTHER" id="PTHR16079">
    <property type="entry name" value="UBIQUITIN LIGASE PROTEIN CHFR"/>
    <property type="match status" value="1"/>
</dbReference>
<dbReference type="Pfam" id="PF00498">
    <property type="entry name" value="FHA"/>
    <property type="match status" value="1"/>
</dbReference>
<dbReference type="Pfam" id="PF17979">
    <property type="entry name" value="zf-CRD"/>
    <property type="match status" value="1"/>
</dbReference>
<dbReference type="Pfam" id="PF13639">
    <property type="entry name" value="zf-RING_2"/>
    <property type="match status" value="1"/>
</dbReference>
<dbReference type="SMART" id="SM00240">
    <property type="entry name" value="FHA"/>
    <property type="match status" value="1"/>
</dbReference>
<dbReference type="SMART" id="SM00184">
    <property type="entry name" value="RING"/>
    <property type="match status" value="1"/>
</dbReference>
<dbReference type="SUPFAM" id="SSF57850">
    <property type="entry name" value="RING/U-box"/>
    <property type="match status" value="1"/>
</dbReference>
<dbReference type="SUPFAM" id="SSF49879">
    <property type="entry name" value="SMAD/FHA domain"/>
    <property type="match status" value="1"/>
</dbReference>
<dbReference type="PROSITE" id="PS50006">
    <property type="entry name" value="FHA_DOMAIN"/>
    <property type="match status" value="1"/>
</dbReference>
<dbReference type="PROSITE" id="PS00518">
    <property type="entry name" value="ZF_RING_1"/>
    <property type="match status" value="1"/>
</dbReference>
<dbReference type="PROSITE" id="PS50089">
    <property type="entry name" value="ZF_RING_2"/>
    <property type="match status" value="1"/>
</dbReference>
<accession>Q6P256</accession>
<sequence>MDGLGEKKPWGKLSRLLGAETESSSELFLYKKEWTIGRKKACDLSFPGNKLVSGEHCKITVNEESGSVSLEDTSTNGTVINKLKVVKKQTYPLKNGDVIYVVYRKNEPEQNVAYLYKSLNQAEDSMQNPADTSGSEEADTQTLSSQDDQLSYEEPQPSTSTSSLFSTPTTSASEPACTLLYKSQASVPGVQLESGEKSGESLEGHSSTSDATAHEKGSLGPPKKRMRTEDLWTGNKNLVSASCSKGASDESKTPSMKPDKMEETLTCIICQELLHDCVSLQPCMHTFCAACYSGWMERSSLCPTCRCPVERICKNHILNNLVEAYLIQHPEKCRSEEDRCSMDARNKITQDMLQPKVRRSFSDEEGSSEDLLELSDVDSESSDISQPYTVCRQCPGYVRHNIQPPPYPPPSDTEASRTQGDAPSTSTNFPTATQEYVCPSHGSHVICTCCFQPMPDRRAEREHNSHVAPQQCTICLEPFCHMYWGCNRMGCFGCLAPFCELNLGDKCLDGVLNNNNYESDILKNYLASRGLTWKDMLNESLSAAQRGVFMLPDYRINGTTVLCYFCGLRNFRILTYQYRQNIPASELPVTVTSRPNCYWGRNCRTQVKAHHAMKFNHICEQTRFKN</sequence>
<keyword id="KW-0131">Cell cycle</keyword>
<keyword id="KW-0132">Cell division</keyword>
<keyword id="KW-0479">Metal-binding</keyword>
<keyword id="KW-0498">Mitosis</keyword>
<keyword id="KW-0539">Nucleus</keyword>
<keyword id="KW-1185">Reference proteome</keyword>
<keyword id="KW-0808">Transferase</keyword>
<keyword id="KW-0833">Ubl conjugation pathway</keyword>
<keyword id="KW-0862">Zinc</keyword>
<keyword id="KW-0863">Zinc-finger</keyword>
<gene>
    <name type="primary">chfr</name>
</gene>
<proteinExistence type="evidence at transcript level"/>
<feature type="chain" id="PRO_0000385304" description="E3 ubiquitin-protein ligase CHFR">
    <location>
        <begin position="1"/>
        <end position="626"/>
    </location>
</feature>
<feature type="domain" description="FHA" evidence="3">
    <location>
        <begin position="34"/>
        <end position="85"/>
    </location>
</feature>
<feature type="zinc finger region" description="RING-type" evidence="4">
    <location>
        <begin position="267"/>
        <end position="306"/>
    </location>
</feature>
<feature type="zinc finger region" description="PBZ-type">
    <location>
        <begin position="595"/>
        <end position="617"/>
    </location>
</feature>
<feature type="region of interest" description="Disordered" evidence="5">
    <location>
        <begin position="123"/>
        <end position="170"/>
    </location>
</feature>
<feature type="region of interest" description="Disordered" evidence="5">
    <location>
        <begin position="188"/>
        <end position="229"/>
    </location>
</feature>
<feature type="region of interest" description="Disordered" evidence="5">
    <location>
        <begin position="351"/>
        <end position="387"/>
    </location>
</feature>
<feature type="region of interest" description="Disordered" evidence="5">
    <location>
        <begin position="402"/>
        <end position="428"/>
    </location>
</feature>
<feature type="compositionally biased region" description="Polar residues" evidence="5">
    <location>
        <begin position="123"/>
        <end position="133"/>
    </location>
</feature>
<feature type="compositionally biased region" description="Polar residues" evidence="5">
    <location>
        <begin position="140"/>
        <end position="149"/>
    </location>
</feature>
<feature type="compositionally biased region" description="Low complexity" evidence="5">
    <location>
        <begin position="158"/>
        <end position="170"/>
    </location>
</feature>
<feature type="compositionally biased region" description="Basic and acidic residues" evidence="5">
    <location>
        <begin position="194"/>
        <end position="203"/>
    </location>
</feature>
<feature type="compositionally biased region" description="Acidic residues" evidence="5">
    <location>
        <begin position="363"/>
        <end position="381"/>
    </location>
</feature>
<feature type="compositionally biased region" description="Polar residues" evidence="5">
    <location>
        <begin position="416"/>
        <end position="428"/>
    </location>
</feature>
<comment type="function">
    <text evidence="2">E3 ubiquitin-protein ligase that functions in the antephase checkpoint by actively delaying passage into mitosis in response to microtubule poisons. Acts in early prophase before chromosome condensation, when the centrosome move apart from each other along the periphery of the nucleus. Probably involved in signaling the presence of mitotic stress caused by microtubule poisons by mediating the 'Lys-48'-linked ubiquitination of target proteins, leading to their degradation by the proteasome. May also promote the formation of 'Lys-63'-linked polyubiquitin chains and functions with the specific ubiquitin-conjugating ubc13-mms2 (ube2n-ube2v2) heterodimer. Substrates that are polyubiquitinated at 'Lys-63' are usually not targeted for degradation, but are rather involved in signaling cellular stress.</text>
</comment>
<comment type="catalytic activity">
    <reaction evidence="2">
        <text>S-ubiquitinyl-[E2 ubiquitin-conjugating enzyme]-L-cysteine + [acceptor protein]-L-lysine = [E2 ubiquitin-conjugating enzyme]-L-cysteine + N(6)-ubiquitinyl-[acceptor protein]-L-lysine.</text>
        <dbReference type="EC" id="2.3.2.27"/>
    </reaction>
</comment>
<comment type="pathway">
    <text>Protein modification; protein ubiquitination.</text>
</comment>
<comment type="subcellular location">
    <subcellularLocation>
        <location evidence="1">Nucleus</location>
        <location evidence="1">PML body</location>
    </subcellularLocation>
</comment>
<comment type="domain">
    <text evidence="2">The PBZ-type zinc finger (also named CYR) mediates non-covalent poly(ADP-ribose)-binding. Poly(ADP-ribose)-binding is dependent on the presence of zinc and is required for its function in antephase checkpoint.</text>
</comment>
<comment type="domain">
    <text evidence="2">The FHA domain plays a key role in the anti-proliferative properties of the protein and is involved in initiating a cell cycle arrest at G2/M.</text>
</comment>
<comment type="similarity">
    <text evidence="6">Belongs to the CHFR family.</text>
</comment>
<reference key="1">
    <citation type="submission" date="2003-12" db="EMBL/GenBank/DDBJ databases">
        <authorList>
            <consortium name="NIH - Xenopus Gene Collection (XGC) project"/>
        </authorList>
    </citation>
    <scope>NUCLEOTIDE SEQUENCE [LARGE SCALE MRNA]</scope>
    <source>
        <tissue>Embryo</tissue>
    </source>
</reference>
<protein>
    <recommendedName>
        <fullName>E3 ubiquitin-protein ligase CHFR</fullName>
        <ecNumber evidence="2">2.3.2.27</ecNumber>
    </recommendedName>
    <alternativeName>
        <fullName>Checkpoint with forkhead and RING finger domains protein</fullName>
    </alternativeName>
    <alternativeName>
        <fullName evidence="6">RING-type E3 ubiquitin transferase CHFR</fullName>
    </alternativeName>
</protein>
<name>CHFR_XENTR</name>